<accession>C6DIR6</accession>
<gene>
    <name type="ordered locus">PC1_0307</name>
</gene>
<evidence type="ECO:0000255" key="1">
    <source>
        <dbReference type="HAMAP-Rule" id="MF_00048"/>
    </source>
</evidence>
<dbReference type="EMBL" id="CP001657">
    <property type="protein sequence ID" value="ACT11366.1"/>
    <property type="molecule type" value="Genomic_DNA"/>
</dbReference>
<dbReference type="SMR" id="C6DIR6"/>
<dbReference type="STRING" id="561230.PC1_0307"/>
<dbReference type="KEGG" id="pct:PC1_0307"/>
<dbReference type="eggNOG" id="COG0792">
    <property type="taxonomic scope" value="Bacteria"/>
</dbReference>
<dbReference type="HOGENOM" id="CLU_115353_1_0_6"/>
<dbReference type="Proteomes" id="UP000002736">
    <property type="component" value="Chromosome"/>
</dbReference>
<dbReference type="GO" id="GO:0003676">
    <property type="term" value="F:nucleic acid binding"/>
    <property type="evidence" value="ECO:0007669"/>
    <property type="project" value="InterPro"/>
</dbReference>
<dbReference type="Gene3D" id="3.40.1350.10">
    <property type="match status" value="1"/>
</dbReference>
<dbReference type="HAMAP" id="MF_00048">
    <property type="entry name" value="UPF0102"/>
    <property type="match status" value="1"/>
</dbReference>
<dbReference type="InterPro" id="IPR011335">
    <property type="entry name" value="Restrct_endonuc-II-like"/>
</dbReference>
<dbReference type="InterPro" id="IPR011856">
    <property type="entry name" value="tRNA_endonuc-like_dom_sf"/>
</dbReference>
<dbReference type="InterPro" id="IPR003509">
    <property type="entry name" value="UPF0102_YraN-like"/>
</dbReference>
<dbReference type="NCBIfam" id="NF009150">
    <property type="entry name" value="PRK12497.1-3"/>
    <property type="match status" value="1"/>
</dbReference>
<dbReference type="NCBIfam" id="TIGR00252">
    <property type="entry name" value="YraN family protein"/>
    <property type="match status" value="1"/>
</dbReference>
<dbReference type="PANTHER" id="PTHR34039">
    <property type="entry name" value="UPF0102 PROTEIN YRAN"/>
    <property type="match status" value="1"/>
</dbReference>
<dbReference type="PANTHER" id="PTHR34039:SF1">
    <property type="entry name" value="UPF0102 PROTEIN YRAN"/>
    <property type="match status" value="1"/>
</dbReference>
<dbReference type="Pfam" id="PF02021">
    <property type="entry name" value="UPF0102"/>
    <property type="match status" value="1"/>
</dbReference>
<dbReference type="SUPFAM" id="SSF52980">
    <property type="entry name" value="Restriction endonuclease-like"/>
    <property type="match status" value="1"/>
</dbReference>
<feature type="chain" id="PRO_1000202215" description="UPF0102 protein PC1_0307">
    <location>
        <begin position="1"/>
        <end position="118"/>
    </location>
</feature>
<comment type="similarity">
    <text evidence="1">Belongs to the UPF0102 family.</text>
</comment>
<sequence>MNQRAAGAVYEQQARRYLERAGLTFTAANVTLRGGELDLIMRDRHIWVFVEVRYRRNAHFGDAAASVTRHKQQRLLHAAAVWLAQRGASFDTVDCRFDVLAITGDRFDWIPNAFATQG</sequence>
<organism>
    <name type="scientific">Pectobacterium carotovorum subsp. carotovorum (strain PC1)</name>
    <dbReference type="NCBI Taxonomy" id="561230"/>
    <lineage>
        <taxon>Bacteria</taxon>
        <taxon>Pseudomonadati</taxon>
        <taxon>Pseudomonadota</taxon>
        <taxon>Gammaproteobacteria</taxon>
        <taxon>Enterobacterales</taxon>
        <taxon>Pectobacteriaceae</taxon>
        <taxon>Pectobacterium</taxon>
    </lineage>
</organism>
<name>Y307_PECCP</name>
<proteinExistence type="inferred from homology"/>
<reference key="1">
    <citation type="submission" date="2009-07" db="EMBL/GenBank/DDBJ databases">
        <title>Complete sequence of Pectobacterium carotovorum subsp. carotovorum PC1.</title>
        <authorList>
            <consortium name="US DOE Joint Genome Institute"/>
            <person name="Lucas S."/>
            <person name="Copeland A."/>
            <person name="Lapidus A."/>
            <person name="Glavina del Rio T."/>
            <person name="Tice H."/>
            <person name="Bruce D."/>
            <person name="Goodwin L."/>
            <person name="Pitluck S."/>
            <person name="Munk A.C."/>
            <person name="Brettin T."/>
            <person name="Detter J.C."/>
            <person name="Han C."/>
            <person name="Tapia R."/>
            <person name="Larimer F."/>
            <person name="Land M."/>
            <person name="Hauser L."/>
            <person name="Kyrpides N."/>
            <person name="Mikhailova N."/>
            <person name="Balakrishnan V."/>
            <person name="Glasner J."/>
            <person name="Perna N.T."/>
        </authorList>
    </citation>
    <scope>NUCLEOTIDE SEQUENCE [LARGE SCALE GENOMIC DNA]</scope>
    <source>
        <strain>PC1</strain>
    </source>
</reference>
<protein>
    <recommendedName>
        <fullName evidence="1">UPF0102 protein PC1_0307</fullName>
    </recommendedName>
</protein>